<name>RLMN_SPHAL</name>
<dbReference type="EC" id="2.1.1.192" evidence="1"/>
<dbReference type="EMBL" id="CP000356">
    <property type="protein sequence ID" value="ABF52424.1"/>
    <property type="molecule type" value="Genomic_DNA"/>
</dbReference>
<dbReference type="RefSeq" id="WP_011541014.1">
    <property type="nucleotide sequence ID" value="NC_008048.1"/>
</dbReference>
<dbReference type="SMR" id="Q1GV98"/>
<dbReference type="STRING" id="317655.Sala_0703"/>
<dbReference type="KEGG" id="sal:Sala_0703"/>
<dbReference type="eggNOG" id="COG0820">
    <property type="taxonomic scope" value="Bacteria"/>
</dbReference>
<dbReference type="HOGENOM" id="CLU_029101_0_0_5"/>
<dbReference type="OrthoDB" id="9793973at2"/>
<dbReference type="Proteomes" id="UP000006578">
    <property type="component" value="Chromosome"/>
</dbReference>
<dbReference type="GO" id="GO:0005737">
    <property type="term" value="C:cytoplasm"/>
    <property type="evidence" value="ECO:0007669"/>
    <property type="project" value="UniProtKB-SubCell"/>
</dbReference>
<dbReference type="GO" id="GO:0051539">
    <property type="term" value="F:4 iron, 4 sulfur cluster binding"/>
    <property type="evidence" value="ECO:0007669"/>
    <property type="project" value="UniProtKB-UniRule"/>
</dbReference>
<dbReference type="GO" id="GO:0046872">
    <property type="term" value="F:metal ion binding"/>
    <property type="evidence" value="ECO:0007669"/>
    <property type="project" value="UniProtKB-KW"/>
</dbReference>
<dbReference type="GO" id="GO:0070040">
    <property type="term" value="F:rRNA (adenine(2503)-C2-)-methyltransferase activity"/>
    <property type="evidence" value="ECO:0007669"/>
    <property type="project" value="UniProtKB-UniRule"/>
</dbReference>
<dbReference type="GO" id="GO:0019843">
    <property type="term" value="F:rRNA binding"/>
    <property type="evidence" value="ECO:0007669"/>
    <property type="project" value="UniProtKB-UniRule"/>
</dbReference>
<dbReference type="GO" id="GO:0002935">
    <property type="term" value="F:tRNA (adenine(37)-C2)-methyltransferase activity"/>
    <property type="evidence" value="ECO:0007669"/>
    <property type="project" value="UniProtKB-UniRule"/>
</dbReference>
<dbReference type="GO" id="GO:0000049">
    <property type="term" value="F:tRNA binding"/>
    <property type="evidence" value="ECO:0007669"/>
    <property type="project" value="UniProtKB-UniRule"/>
</dbReference>
<dbReference type="GO" id="GO:0070475">
    <property type="term" value="P:rRNA base methylation"/>
    <property type="evidence" value="ECO:0007669"/>
    <property type="project" value="UniProtKB-UniRule"/>
</dbReference>
<dbReference type="GO" id="GO:0030488">
    <property type="term" value="P:tRNA methylation"/>
    <property type="evidence" value="ECO:0007669"/>
    <property type="project" value="UniProtKB-UniRule"/>
</dbReference>
<dbReference type="CDD" id="cd01335">
    <property type="entry name" value="Radical_SAM"/>
    <property type="match status" value="1"/>
</dbReference>
<dbReference type="Gene3D" id="1.10.150.530">
    <property type="match status" value="1"/>
</dbReference>
<dbReference type="Gene3D" id="3.20.20.70">
    <property type="entry name" value="Aldolase class I"/>
    <property type="match status" value="1"/>
</dbReference>
<dbReference type="HAMAP" id="MF_01849">
    <property type="entry name" value="RNA_methyltr_RlmN"/>
    <property type="match status" value="1"/>
</dbReference>
<dbReference type="InterPro" id="IPR013785">
    <property type="entry name" value="Aldolase_TIM"/>
</dbReference>
<dbReference type="InterPro" id="IPR040072">
    <property type="entry name" value="Methyltransferase_A"/>
</dbReference>
<dbReference type="InterPro" id="IPR048641">
    <property type="entry name" value="RlmN_N"/>
</dbReference>
<dbReference type="InterPro" id="IPR027492">
    <property type="entry name" value="RNA_MTrfase_RlmN"/>
</dbReference>
<dbReference type="InterPro" id="IPR004383">
    <property type="entry name" value="rRNA_lsu_MTrfase_RlmN/Cfr"/>
</dbReference>
<dbReference type="InterPro" id="IPR007197">
    <property type="entry name" value="rSAM"/>
</dbReference>
<dbReference type="PANTHER" id="PTHR30544">
    <property type="entry name" value="23S RRNA METHYLTRANSFERASE"/>
    <property type="match status" value="1"/>
</dbReference>
<dbReference type="PANTHER" id="PTHR30544:SF5">
    <property type="entry name" value="RADICAL SAM CORE DOMAIN-CONTAINING PROTEIN"/>
    <property type="match status" value="1"/>
</dbReference>
<dbReference type="Pfam" id="PF04055">
    <property type="entry name" value="Radical_SAM"/>
    <property type="match status" value="1"/>
</dbReference>
<dbReference type="Pfam" id="PF21016">
    <property type="entry name" value="RlmN_N"/>
    <property type="match status" value="1"/>
</dbReference>
<dbReference type="PIRSF" id="PIRSF006004">
    <property type="entry name" value="CHP00048"/>
    <property type="match status" value="1"/>
</dbReference>
<dbReference type="SFLD" id="SFLDF00275">
    <property type="entry name" value="adenosine_C2_methyltransferase"/>
    <property type="match status" value="1"/>
</dbReference>
<dbReference type="SFLD" id="SFLDG01062">
    <property type="entry name" value="methyltransferase_(Class_A)"/>
    <property type="match status" value="1"/>
</dbReference>
<dbReference type="SUPFAM" id="SSF102114">
    <property type="entry name" value="Radical SAM enzymes"/>
    <property type="match status" value="1"/>
</dbReference>
<dbReference type="PROSITE" id="PS51918">
    <property type="entry name" value="RADICAL_SAM"/>
    <property type="match status" value="1"/>
</dbReference>
<feature type="chain" id="PRO_0000350424" description="Dual-specificity RNA methyltransferase RlmN">
    <location>
        <begin position="1"/>
        <end position="420"/>
    </location>
</feature>
<feature type="domain" description="Radical SAM core" evidence="2">
    <location>
        <begin position="121"/>
        <end position="388"/>
    </location>
</feature>
<feature type="active site" description="Proton acceptor" evidence="1">
    <location>
        <position position="115"/>
    </location>
</feature>
<feature type="active site" description="S-methylcysteine intermediate" evidence="1">
    <location>
        <position position="393"/>
    </location>
</feature>
<feature type="binding site" evidence="1">
    <location>
        <position position="135"/>
    </location>
    <ligand>
        <name>[4Fe-4S] cluster</name>
        <dbReference type="ChEBI" id="CHEBI:49883"/>
        <note>4Fe-4S-S-AdoMet</note>
    </ligand>
</feature>
<feature type="binding site" evidence="1">
    <location>
        <position position="139"/>
    </location>
    <ligand>
        <name>[4Fe-4S] cluster</name>
        <dbReference type="ChEBI" id="CHEBI:49883"/>
        <note>4Fe-4S-S-AdoMet</note>
    </ligand>
</feature>
<feature type="binding site" evidence="1">
    <location>
        <position position="142"/>
    </location>
    <ligand>
        <name>[4Fe-4S] cluster</name>
        <dbReference type="ChEBI" id="CHEBI:49883"/>
        <note>4Fe-4S-S-AdoMet</note>
    </ligand>
</feature>
<feature type="binding site" evidence="1">
    <location>
        <begin position="217"/>
        <end position="218"/>
    </location>
    <ligand>
        <name>S-adenosyl-L-methionine</name>
        <dbReference type="ChEBI" id="CHEBI:59789"/>
    </ligand>
</feature>
<feature type="binding site" evidence="1">
    <location>
        <position position="249"/>
    </location>
    <ligand>
        <name>S-adenosyl-L-methionine</name>
        <dbReference type="ChEBI" id="CHEBI:59789"/>
    </ligand>
</feature>
<feature type="binding site" evidence="1">
    <location>
        <begin position="271"/>
        <end position="273"/>
    </location>
    <ligand>
        <name>S-adenosyl-L-methionine</name>
        <dbReference type="ChEBI" id="CHEBI:59789"/>
    </ligand>
</feature>
<feature type="binding site" evidence="1">
    <location>
        <position position="350"/>
    </location>
    <ligand>
        <name>S-adenosyl-L-methionine</name>
        <dbReference type="ChEBI" id="CHEBI:59789"/>
    </ligand>
</feature>
<feature type="disulfide bond" description="(transient)" evidence="1">
    <location>
        <begin position="128"/>
        <end position="393"/>
    </location>
</feature>
<comment type="function">
    <text evidence="1">Specifically methylates position 2 of adenine 2503 in 23S rRNA and position 2 of adenine 37 in tRNAs. m2A2503 modification seems to play a crucial role in the proofreading step occurring at the peptidyl transferase center and thus would serve to optimize ribosomal fidelity.</text>
</comment>
<comment type="catalytic activity">
    <reaction evidence="1">
        <text>adenosine(2503) in 23S rRNA + 2 reduced [2Fe-2S]-[ferredoxin] + 2 S-adenosyl-L-methionine = 2-methyladenosine(2503) in 23S rRNA + 5'-deoxyadenosine + L-methionine + 2 oxidized [2Fe-2S]-[ferredoxin] + S-adenosyl-L-homocysteine</text>
        <dbReference type="Rhea" id="RHEA:42916"/>
        <dbReference type="Rhea" id="RHEA-COMP:10000"/>
        <dbReference type="Rhea" id="RHEA-COMP:10001"/>
        <dbReference type="Rhea" id="RHEA-COMP:10152"/>
        <dbReference type="Rhea" id="RHEA-COMP:10282"/>
        <dbReference type="ChEBI" id="CHEBI:17319"/>
        <dbReference type="ChEBI" id="CHEBI:33737"/>
        <dbReference type="ChEBI" id="CHEBI:33738"/>
        <dbReference type="ChEBI" id="CHEBI:57844"/>
        <dbReference type="ChEBI" id="CHEBI:57856"/>
        <dbReference type="ChEBI" id="CHEBI:59789"/>
        <dbReference type="ChEBI" id="CHEBI:74411"/>
        <dbReference type="ChEBI" id="CHEBI:74497"/>
        <dbReference type="EC" id="2.1.1.192"/>
    </reaction>
</comment>
<comment type="catalytic activity">
    <reaction evidence="1">
        <text>adenosine(37) in tRNA + 2 reduced [2Fe-2S]-[ferredoxin] + 2 S-adenosyl-L-methionine = 2-methyladenosine(37) in tRNA + 5'-deoxyadenosine + L-methionine + 2 oxidized [2Fe-2S]-[ferredoxin] + S-adenosyl-L-homocysteine</text>
        <dbReference type="Rhea" id="RHEA:43332"/>
        <dbReference type="Rhea" id="RHEA-COMP:10000"/>
        <dbReference type="Rhea" id="RHEA-COMP:10001"/>
        <dbReference type="Rhea" id="RHEA-COMP:10162"/>
        <dbReference type="Rhea" id="RHEA-COMP:10485"/>
        <dbReference type="ChEBI" id="CHEBI:17319"/>
        <dbReference type="ChEBI" id="CHEBI:33737"/>
        <dbReference type="ChEBI" id="CHEBI:33738"/>
        <dbReference type="ChEBI" id="CHEBI:57844"/>
        <dbReference type="ChEBI" id="CHEBI:57856"/>
        <dbReference type="ChEBI" id="CHEBI:59789"/>
        <dbReference type="ChEBI" id="CHEBI:74411"/>
        <dbReference type="ChEBI" id="CHEBI:74497"/>
        <dbReference type="EC" id="2.1.1.192"/>
    </reaction>
</comment>
<comment type="cofactor">
    <cofactor evidence="1">
        <name>[4Fe-4S] cluster</name>
        <dbReference type="ChEBI" id="CHEBI:49883"/>
    </cofactor>
    <text evidence="1">Binds 1 [4Fe-4S] cluster. The cluster is coordinated with 3 cysteines and an exchangeable S-adenosyl-L-methionine.</text>
</comment>
<comment type="subcellular location">
    <subcellularLocation>
        <location evidence="1">Cytoplasm</location>
    </subcellularLocation>
</comment>
<comment type="miscellaneous">
    <text evidence="1">Reaction proceeds by a ping-pong mechanism involving intermediate methylation of a conserved cysteine residue.</text>
</comment>
<comment type="similarity">
    <text evidence="1">Belongs to the radical SAM superfamily. RlmN family.</text>
</comment>
<organism>
    <name type="scientific">Sphingopyxis alaskensis (strain DSM 13593 / LMG 18877 / RB2256)</name>
    <name type="common">Sphingomonas alaskensis</name>
    <dbReference type="NCBI Taxonomy" id="317655"/>
    <lineage>
        <taxon>Bacteria</taxon>
        <taxon>Pseudomonadati</taxon>
        <taxon>Pseudomonadota</taxon>
        <taxon>Alphaproteobacteria</taxon>
        <taxon>Sphingomonadales</taxon>
        <taxon>Sphingomonadaceae</taxon>
        <taxon>Sphingopyxis</taxon>
    </lineage>
</organism>
<accession>Q1GV98</accession>
<reference key="1">
    <citation type="journal article" date="2009" name="Proc. Natl. Acad. Sci. U.S.A.">
        <title>The genomic basis of trophic strategy in marine bacteria.</title>
        <authorList>
            <person name="Lauro F.M."/>
            <person name="McDougald D."/>
            <person name="Thomas T."/>
            <person name="Williams T.J."/>
            <person name="Egan S."/>
            <person name="Rice S."/>
            <person name="DeMaere M.Z."/>
            <person name="Ting L."/>
            <person name="Ertan H."/>
            <person name="Johnson J."/>
            <person name="Ferriera S."/>
            <person name="Lapidus A."/>
            <person name="Anderson I."/>
            <person name="Kyrpides N."/>
            <person name="Munk A.C."/>
            <person name="Detter C."/>
            <person name="Han C.S."/>
            <person name="Brown M.V."/>
            <person name="Robb F.T."/>
            <person name="Kjelleberg S."/>
            <person name="Cavicchioli R."/>
        </authorList>
    </citation>
    <scope>NUCLEOTIDE SEQUENCE [LARGE SCALE GENOMIC DNA]</scope>
    <source>
        <strain>DSM 13593 / LMG 18877 / RB2256</strain>
    </source>
</reference>
<keyword id="KW-0004">4Fe-4S</keyword>
<keyword id="KW-0963">Cytoplasm</keyword>
<keyword id="KW-1015">Disulfide bond</keyword>
<keyword id="KW-0408">Iron</keyword>
<keyword id="KW-0411">Iron-sulfur</keyword>
<keyword id="KW-0479">Metal-binding</keyword>
<keyword id="KW-0489">Methyltransferase</keyword>
<keyword id="KW-1185">Reference proteome</keyword>
<keyword id="KW-0698">rRNA processing</keyword>
<keyword id="KW-0949">S-adenosyl-L-methionine</keyword>
<keyword id="KW-0808">Transferase</keyword>
<keyword id="KW-0819">tRNA processing</keyword>
<sequence>MQIPGHIDPVTTGTVPLRGGNRIDLVGLSRDAIGGVLVEAGLDAKAAKLRAKQIWHWIYHRGVTDFMGMTDIAKAMRPWLTDRFIIGRPTVREAQVSSDGTRKWLLAAADGQEYEMVFIPDADRGTLCVSSQVGCTLNCRFCHTGTMRLVRNLGAGEIVGQVLLARDALGEWPKGNMAGFGAGSDADPEDDDADDDAVGHYTADGRMLTNIVMMGMGEPLYNFDEVKAALKIVMDGDGLALSKRRITLSTSGVVPMMARAGEEIGVNLAVSLHAVSKEIRDEIVPLNRKYGIEELLQACADYPGANNARRITFEYVMLKDKNDRDEDARELVRLIKQYKLPAKVNLIPFNPWPGAPYECSTPERVRAFSNLIFKAGISAPIRTPRGRDIMAACGQLKSAATRPTRAELDRIAEEKQAALG</sequence>
<gene>
    <name evidence="1" type="primary">rlmN</name>
    <name type="ordered locus">Sala_0703</name>
</gene>
<evidence type="ECO:0000255" key="1">
    <source>
        <dbReference type="HAMAP-Rule" id="MF_01849"/>
    </source>
</evidence>
<evidence type="ECO:0000255" key="2">
    <source>
        <dbReference type="PROSITE-ProRule" id="PRU01266"/>
    </source>
</evidence>
<proteinExistence type="inferred from homology"/>
<protein>
    <recommendedName>
        <fullName evidence="1">Dual-specificity RNA methyltransferase RlmN</fullName>
        <ecNumber evidence="1">2.1.1.192</ecNumber>
    </recommendedName>
    <alternativeName>
        <fullName evidence="1">23S rRNA (adenine(2503)-C(2))-methyltransferase</fullName>
    </alternativeName>
    <alternativeName>
        <fullName evidence="1">23S rRNA m2A2503 methyltransferase</fullName>
    </alternativeName>
    <alternativeName>
        <fullName evidence="1">Ribosomal RNA large subunit methyltransferase N</fullName>
    </alternativeName>
    <alternativeName>
        <fullName evidence="1">tRNA (adenine(37)-C(2))-methyltransferase</fullName>
    </alternativeName>
    <alternativeName>
        <fullName evidence="1">tRNA m2A37 methyltransferase</fullName>
    </alternativeName>
</protein>